<geneLocation type="chloroplast"/>
<feature type="chain" id="PRO_0000368922" description="ATP synthase subunit b, chloroplastic">
    <location>
        <begin position="1"/>
        <end position="184"/>
    </location>
</feature>
<feature type="transmembrane region" description="Helical" evidence="1">
    <location>
        <begin position="27"/>
        <end position="49"/>
    </location>
</feature>
<gene>
    <name evidence="1" type="primary">atpF</name>
</gene>
<dbReference type="EMBL" id="AP009372">
    <property type="protein sequence ID" value="BAF50272.1"/>
    <property type="molecule type" value="Genomic_DNA"/>
</dbReference>
<dbReference type="RefSeq" id="YP_001123448.1">
    <property type="nucleotide sequence ID" value="NC_009271.1"/>
</dbReference>
<dbReference type="SMR" id="A4QKR7"/>
<dbReference type="GeneID" id="4962627"/>
<dbReference type="GO" id="GO:0009535">
    <property type="term" value="C:chloroplast thylakoid membrane"/>
    <property type="evidence" value="ECO:0007669"/>
    <property type="project" value="UniProtKB-SubCell"/>
</dbReference>
<dbReference type="GO" id="GO:0045259">
    <property type="term" value="C:proton-transporting ATP synthase complex"/>
    <property type="evidence" value="ECO:0007669"/>
    <property type="project" value="UniProtKB-KW"/>
</dbReference>
<dbReference type="GO" id="GO:0046933">
    <property type="term" value="F:proton-transporting ATP synthase activity, rotational mechanism"/>
    <property type="evidence" value="ECO:0007669"/>
    <property type="project" value="UniProtKB-UniRule"/>
</dbReference>
<dbReference type="CDD" id="cd06503">
    <property type="entry name" value="ATP-synt_Fo_b"/>
    <property type="match status" value="1"/>
</dbReference>
<dbReference type="HAMAP" id="MF_01398">
    <property type="entry name" value="ATP_synth_b_bprime"/>
    <property type="match status" value="1"/>
</dbReference>
<dbReference type="InterPro" id="IPR002146">
    <property type="entry name" value="ATP_synth_b/b'su_bac/chlpt"/>
</dbReference>
<dbReference type="PANTHER" id="PTHR34264">
    <property type="entry name" value="ATP SYNTHASE SUBUNIT B, CHLOROPLASTIC"/>
    <property type="match status" value="1"/>
</dbReference>
<dbReference type="PANTHER" id="PTHR34264:SF3">
    <property type="entry name" value="ATP SYNTHASE SUBUNIT B, CHLOROPLASTIC"/>
    <property type="match status" value="1"/>
</dbReference>
<dbReference type="Pfam" id="PF00430">
    <property type="entry name" value="ATP-synt_B"/>
    <property type="match status" value="1"/>
</dbReference>
<sequence length="184" mass="21085">MKNLTDSFVYLGHWPSAGSFGFNTDILATNPINLSVVFGVLIFFGKGVLNDLLDNRKQRILNTIRNSEELREAAIQQLENARARLRKVETEADQFRVNGYSEIEREKLNLINSTYKTLKQLENYKNETILFEQQRTINQVRERVFQQALQGAIGTLNSCLSNELHLRTINANIGMFGTMKEITD</sequence>
<proteinExistence type="inferred from homology"/>
<protein>
    <recommendedName>
        <fullName evidence="1">ATP synthase subunit b, chloroplastic</fullName>
    </recommendedName>
    <alternativeName>
        <fullName evidence="1">ATP synthase F(0) sector subunit b</fullName>
    </alternativeName>
    <alternativeName>
        <fullName evidence="1">ATPase subunit I</fullName>
    </alternativeName>
</protein>
<evidence type="ECO:0000255" key="1">
    <source>
        <dbReference type="HAMAP-Rule" id="MF_01398"/>
    </source>
</evidence>
<reference key="1">
    <citation type="submission" date="2007-03" db="EMBL/GenBank/DDBJ databases">
        <title>Sequencing analysis of Crucihimalaya wallichii chloroplast DNA.</title>
        <authorList>
            <person name="Hosouchi T."/>
            <person name="Tsuruoka H."/>
            <person name="Kotani H."/>
        </authorList>
    </citation>
    <scope>NUCLEOTIDE SEQUENCE [LARGE SCALE GENOMIC DNA]</scope>
</reference>
<keyword id="KW-0066">ATP synthesis</keyword>
<keyword id="KW-0138">CF(0)</keyword>
<keyword id="KW-0150">Chloroplast</keyword>
<keyword id="KW-0375">Hydrogen ion transport</keyword>
<keyword id="KW-0406">Ion transport</keyword>
<keyword id="KW-0472">Membrane</keyword>
<keyword id="KW-0934">Plastid</keyword>
<keyword id="KW-0793">Thylakoid</keyword>
<keyword id="KW-0812">Transmembrane</keyword>
<keyword id="KW-1133">Transmembrane helix</keyword>
<keyword id="KW-0813">Transport</keyword>
<organism>
    <name type="scientific">Crucihimalaya wallichii</name>
    <name type="common">Rock-cress</name>
    <name type="synonym">Arabidopsis campestris</name>
    <dbReference type="NCBI Taxonomy" id="78192"/>
    <lineage>
        <taxon>Eukaryota</taxon>
        <taxon>Viridiplantae</taxon>
        <taxon>Streptophyta</taxon>
        <taxon>Embryophyta</taxon>
        <taxon>Tracheophyta</taxon>
        <taxon>Spermatophyta</taxon>
        <taxon>Magnoliopsida</taxon>
        <taxon>eudicotyledons</taxon>
        <taxon>Gunneridae</taxon>
        <taxon>Pentapetalae</taxon>
        <taxon>rosids</taxon>
        <taxon>malvids</taxon>
        <taxon>Brassicales</taxon>
        <taxon>Brassicaceae</taxon>
        <taxon>Crucihimalayeae</taxon>
        <taxon>Crucihimalaya</taxon>
    </lineage>
</organism>
<name>ATPF_CRUWA</name>
<comment type="function">
    <text evidence="1">F(1)F(0) ATP synthase produces ATP from ADP in the presence of a proton or sodium gradient. F-type ATPases consist of two structural domains, F(1) containing the extramembraneous catalytic core and F(0) containing the membrane proton channel, linked together by a central stalk and a peripheral stalk. During catalysis, ATP synthesis in the catalytic domain of F(1) is coupled via a rotary mechanism of the central stalk subunits to proton translocation.</text>
</comment>
<comment type="function">
    <text evidence="1">Component of the F(0) channel, it forms part of the peripheral stalk, linking F(1) to F(0).</text>
</comment>
<comment type="subunit">
    <text evidence="1">F-type ATPases have 2 components, F(1) - the catalytic core - and F(0) - the membrane proton channel. F(1) has five subunits: alpha(3), beta(3), gamma(1), delta(1), epsilon(1). F(0) has four main subunits: a(1), b(1), b'(1) and c(10-14). The alpha and beta chains form an alternating ring which encloses part of the gamma chain. F(1) is attached to F(0) by a central stalk formed by the gamma and epsilon chains, while a peripheral stalk is formed by the delta, b and b' chains.</text>
</comment>
<comment type="subcellular location">
    <subcellularLocation>
        <location evidence="1">Plastid</location>
        <location evidence="1">Chloroplast thylakoid membrane</location>
        <topology evidence="1">Single-pass membrane protein</topology>
    </subcellularLocation>
</comment>
<comment type="miscellaneous">
    <text>In plastids the F-type ATPase is also known as CF(1)CF(0).</text>
</comment>
<comment type="similarity">
    <text evidence="1">Belongs to the ATPase B chain family.</text>
</comment>
<accession>A4QKR7</accession>